<comment type="function">
    <text evidence="2">Involved in resistance to gentamicin, tobramycin, and kanamycin. Tobramycin and kanamycin resistance is due to the ACC activity, specified by N-terminal region. The C-terminal region is a kinase that phosphorylates several 4,6-disubstituted aminoglycosides.</text>
</comment>
<comment type="catalytic activity">
    <reaction evidence="2">
        <text>a gentamycin + GTP = a gentamycin 2''-phosphate + GDP + H(+)</text>
        <dbReference type="Rhea" id="RHEA:48872"/>
        <dbReference type="ChEBI" id="CHEBI:15378"/>
        <dbReference type="ChEBI" id="CHEBI:37565"/>
        <dbReference type="ChEBI" id="CHEBI:58189"/>
        <dbReference type="ChEBI" id="CHEBI:90218"/>
        <dbReference type="ChEBI" id="CHEBI:90219"/>
        <dbReference type="EC" id="2.7.1.190"/>
    </reaction>
</comment>
<comment type="subcellular location">
    <subcellularLocation>
        <location evidence="1">Cytoplasm</location>
    </subcellularLocation>
</comment>
<comment type="similarity">
    <text evidence="4">In the C-terminal section; belongs to the aminoglycoside phosphotransferase family.</text>
</comment>
<feature type="chain" id="PRO_0000223382" description="Bifunctional AAC/APH">
    <location>
        <begin position="1"/>
        <end position="479"/>
    </location>
</feature>
<feature type="domain" description="N-acetyltransferase" evidence="3">
    <location>
        <begin position="8"/>
        <end position="180"/>
    </location>
</feature>
<feature type="region of interest" description="Acetyl-CoA binding site" evidence="1">
    <location>
        <begin position="110"/>
        <end position="153"/>
    </location>
</feature>
<feature type="active site" description="Proton acceptor; for phosphotransferase activity" evidence="1">
    <location>
        <position position="374"/>
    </location>
</feature>
<feature type="binding site" evidence="1">
    <location>
        <position position="393"/>
    </location>
    <ligand>
        <name>a gentamycin</name>
        <dbReference type="ChEBI" id="CHEBI:90218"/>
    </ligand>
</feature>
<keyword id="KW-0012">Acyltransferase</keyword>
<keyword id="KW-0046">Antibiotic resistance</keyword>
<keyword id="KW-0067">ATP-binding</keyword>
<keyword id="KW-0963">Cytoplasm</keyword>
<keyword id="KW-0418">Kinase</keyword>
<keyword id="KW-0511">Multifunctional enzyme</keyword>
<keyword id="KW-0547">Nucleotide-binding</keyword>
<keyword id="KW-1185">Reference proteome</keyword>
<keyword id="KW-0808">Transferase</keyword>
<evidence type="ECO:0000250" key="1"/>
<evidence type="ECO:0000250" key="2">
    <source>
        <dbReference type="UniProtKB" id="P0A0C2"/>
    </source>
</evidence>
<evidence type="ECO:0000255" key="3">
    <source>
        <dbReference type="PROSITE-ProRule" id="PRU00532"/>
    </source>
</evidence>
<evidence type="ECO:0000305" key="4"/>
<gene>
    <name type="primary">aacA-aphD</name>
    <name type="ordered locus">SERP1585</name>
</gene>
<proteinExistence type="inferred from homology"/>
<accession>Q5HMP3</accession>
<protein>
    <recommendedName>
        <fullName>Bifunctional AAC/APH</fullName>
    </recommendedName>
    <domain>
        <recommendedName>
            <fullName>6'-aminoglycoside N-acetyltransferase</fullName>
            <ecNumber>2.3.1.-</ecNumber>
        </recommendedName>
        <alternativeName>
            <fullName>AAC(6')</fullName>
        </alternativeName>
    </domain>
    <domain>
        <recommendedName>
            <fullName>Aminoglycoside 2''-phosphotransferase</fullName>
        </recommendedName>
        <alternativeName>
            <fullName>2''-aminoglycoside phosphotransferase</fullName>
            <ecNumber evidence="2">2.7.1.190</ecNumber>
        </alternativeName>
        <alternativeName>
            <fullName>APH(2'')</fullName>
        </alternativeName>
    </domain>
</protein>
<sequence length="479" mass="56855">MNIVENEICIRTLIDDDFPLMLKWLTDERVLEFYGGRDKKYTLESLKKHYTEPWEDEVFRVIIEYNNVPIGYGQIYKMYDELYTDYHYPKTDEIVYGMDQFIGEPNYWSKGIGTRYIKLIFEFLKKERNANAVILDPHKNNPRAIRAYQKSGFRIIEDLPEHELHEGKKEDCYLMEYRYDDNATNVKAMKYLIEHYFDNFKVDSIEIIGSGYDSVAYLVNNEYIFKTKFSTNKKKGYAKEKAIYNFLNTNLETNVKIPNIEYSYISDELSILGYKEIKGTFLTPEIYSTMSEEEQNLLKRDIASFLRQMHGLDYTDISECTIDNKQNVLEEYILLRETIYNDLTDIEKDYIESFMERLNATTVFEGKKCLCHNDFSCNHLLLDGNNRLTGIIDFGDSGIIDEYCDFIYLLEDSEEEIGTNFGEDILRMYGNIDIEKAKEYQDIVEEYYPIETIVYGIKNIKQEFIENGRKEIYKRTYKD</sequence>
<organism>
    <name type="scientific">Staphylococcus epidermidis (strain ATCC 35984 / DSM 28319 / BCRC 17069 / CCUG 31568 / BM 3577 / RP62A)</name>
    <dbReference type="NCBI Taxonomy" id="176279"/>
    <lineage>
        <taxon>Bacteria</taxon>
        <taxon>Bacillati</taxon>
        <taxon>Bacillota</taxon>
        <taxon>Bacilli</taxon>
        <taxon>Bacillales</taxon>
        <taxon>Staphylococcaceae</taxon>
        <taxon>Staphylococcus</taxon>
    </lineage>
</organism>
<dbReference type="EC" id="2.3.1.-"/>
<dbReference type="EC" id="2.7.1.190" evidence="2"/>
<dbReference type="EMBL" id="CP000029">
    <property type="protein sequence ID" value="AAW54933.1"/>
    <property type="molecule type" value="Genomic_DNA"/>
</dbReference>
<dbReference type="SMR" id="Q5HMP3"/>
<dbReference type="STRING" id="176279.SERP1585"/>
<dbReference type="KEGG" id="ser:SERP1585"/>
<dbReference type="eggNOG" id="COG1670">
    <property type="taxonomic scope" value="Bacteria"/>
</dbReference>
<dbReference type="eggNOG" id="COG3173">
    <property type="taxonomic scope" value="Bacteria"/>
</dbReference>
<dbReference type="HOGENOM" id="CLU_632450_0_0_9"/>
<dbReference type="Proteomes" id="UP000000531">
    <property type="component" value="Chromosome"/>
</dbReference>
<dbReference type="GO" id="GO:0005737">
    <property type="term" value="C:cytoplasm"/>
    <property type="evidence" value="ECO:0007669"/>
    <property type="project" value="UniProtKB-SubCell"/>
</dbReference>
<dbReference type="GO" id="GO:0034071">
    <property type="term" value="F:aminoglycoside phosphotransferase activity"/>
    <property type="evidence" value="ECO:0007669"/>
    <property type="project" value="UniProtKB-EC"/>
</dbReference>
<dbReference type="GO" id="GO:0005524">
    <property type="term" value="F:ATP binding"/>
    <property type="evidence" value="ECO:0007669"/>
    <property type="project" value="UniProtKB-KW"/>
</dbReference>
<dbReference type="GO" id="GO:0016410">
    <property type="term" value="F:N-acyltransferase activity"/>
    <property type="evidence" value="ECO:0007669"/>
    <property type="project" value="TreeGrafter"/>
</dbReference>
<dbReference type="GO" id="GO:0046677">
    <property type="term" value="P:response to antibiotic"/>
    <property type="evidence" value="ECO:0007669"/>
    <property type="project" value="UniProtKB-KW"/>
</dbReference>
<dbReference type="CDD" id="cd05120">
    <property type="entry name" value="APH_ChoK_like"/>
    <property type="match status" value="1"/>
</dbReference>
<dbReference type="Gene3D" id="3.40.630.30">
    <property type="match status" value="1"/>
</dbReference>
<dbReference type="Gene3D" id="3.90.1200.10">
    <property type="match status" value="1"/>
</dbReference>
<dbReference type="Gene3D" id="3.30.200.20">
    <property type="entry name" value="Phosphorylase Kinase, domain 1"/>
    <property type="match status" value="1"/>
</dbReference>
<dbReference type="InterPro" id="IPR016181">
    <property type="entry name" value="Acyl_CoA_acyltransferase"/>
</dbReference>
<dbReference type="InterPro" id="IPR002575">
    <property type="entry name" value="Aminoglycoside_PTrfase"/>
</dbReference>
<dbReference type="InterPro" id="IPR000182">
    <property type="entry name" value="GNAT_dom"/>
</dbReference>
<dbReference type="InterPro" id="IPR011009">
    <property type="entry name" value="Kinase-like_dom_sf"/>
</dbReference>
<dbReference type="NCBIfam" id="NF000507">
    <property type="entry name" value="AAC_6p_Ie"/>
    <property type="match status" value="1"/>
</dbReference>
<dbReference type="NCBIfam" id="NF033693">
    <property type="entry name" value="AAC_6p_Ie_fam"/>
    <property type="match status" value="1"/>
</dbReference>
<dbReference type="NCBIfam" id="NF033692">
    <property type="entry name" value="APH_2pp_I_a_f_h"/>
    <property type="match status" value="1"/>
</dbReference>
<dbReference type="NCBIfam" id="NF000508">
    <property type="entry name" value="APH_2pp_Ia"/>
    <property type="match status" value="1"/>
</dbReference>
<dbReference type="PANTHER" id="PTHR31438">
    <property type="entry name" value="LYSINE N-ACYLTRANSFERASE C17G9.06C-RELATED"/>
    <property type="match status" value="1"/>
</dbReference>
<dbReference type="PANTHER" id="PTHR31438:SF1">
    <property type="entry name" value="LYSINE N-ACYLTRANSFERASE C17G9.06C-RELATED"/>
    <property type="match status" value="1"/>
</dbReference>
<dbReference type="Pfam" id="PF13523">
    <property type="entry name" value="Acetyltransf_8"/>
    <property type="match status" value="1"/>
</dbReference>
<dbReference type="Pfam" id="PF01636">
    <property type="entry name" value="APH"/>
    <property type="match status" value="1"/>
</dbReference>
<dbReference type="SUPFAM" id="SSF55729">
    <property type="entry name" value="Acyl-CoA N-acyltransferases (Nat)"/>
    <property type="match status" value="1"/>
</dbReference>
<dbReference type="SUPFAM" id="SSF56112">
    <property type="entry name" value="Protein kinase-like (PK-like)"/>
    <property type="match status" value="1"/>
</dbReference>
<dbReference type="PROSITE" id="PS51186">
    <property type="entry name" value="GNAT"/>
    <property type="match status" value="1"/>
</dbReference>
<reference key="1">
    <citation type="journal article" date="2005" name="J. Bacteriol.">
        <title>Insights on evolution of virulence and resistance from the complete genome analysis of an early methicillin-resistant Staphylococcus aureus strain and a biofilm-producing methicillin-resistant Staphylococcus epidermidis strain.</title>
        <authorList>
            <person name="Gill S.R."/>
            <person name="Fouts D.E."/>
            <person name="Archer G.L."/>
            <person name="Mongodin E.F."/>
            <person name="DeBoy R.T."/>
            <person name="Ravel J."/>
            <person name="Paulsen I.T."/>
            <person name="Kolonay J.F."/>
            <person name="Brinkac L.M."/>
            <person name="Beanan M.J."/>
            <person name="Dodson R.J."/>
            <person name="Daugherty S.C."/>
            <person name="Madupu R."/>
            <person name="Angiuoli S.V."/>
            <person name="Durkin A.S."/>
            <person name="Haft D.H."/>
            <person name="Vamathevan J.J."/>
            <person name="Khouri H."/>
            <person name="Utterback T.R."/>
            <person name="Lee C."/>
            <person name="Dimitrov G."/>
            <person name="Jiang L."/>
            <person name="Qin H."/>
            <person name="Weidman J."/>
            <person name="Tran K."/>
            <person name="Kang K.H."/>
            <person name="Hance I.R."/>
            <person name="Nelson K.E."/>
            <person name="Fraser C.M."/>
        </authorList>
    </citation>
    <scope>NUCLEOTIDE SEQUENCE [LARGE SCALE GENOMIC DNA]</scope>
    <source>
        <strain>ATCC 35984 / DSM 28319 / BCRC 17069 / CCUG 31568 / BM 3577 / RP62A</strain>
    </source>
</reference>
<name>AACA_STAEQ</name>